<keyword id="KW-0997">Cell inner membrane</keyword>
<keyword id="KW-1003">Cell membrane</keyword>
<keyword id="KW-0472">Membrane</keyword>
<keyword id="KW-0762">Sugar transport</keyword>
<keyword id="KW-0812">Transmembrane</keyword>
<keyword id="KW-1133">Transmembrane helix</keyword>
<keyword id="KW-0813">Transport</keyword>
<sequence>MMTTLRRRLPDIVQYSVLSLAAFLSIFPFIWMVIGTTNTTSQIIRGKVTFGTALFDNIASFFAQVDVPLVFWNSVKIALVGTALTLLVSSLAGYGFEMFRSKLRERVYTVILLTLMVPFAALMIPLFMLMGQAGLLNTHIAIMLPMIASAFIIFYFRQASKAFPTELRDAAKVDGLKEWQIFFYIYVPVMRSTYAAAFVIVFMLNWNNYLWPLIVLQSNDTKTITLVVSSLASAYSPEYGTVMIGTILATLPTLLVFFAMQRQFVQGMLGSVK</sequence>
<accession>P29824</accession>
<organism>
    <name type="scientific">Rhizobium radiobacter</name>
    <name type="common">Agrobacterium tumefaciens</name>
    <name type="synonym">Agrobacterium radiobacter</name>
    <dbReference type="NCBI Taxonomy" id="358"/>
    <lineage>
        <taxon>Bacteria</taxon>
        <taxon>Pseudomonadati</taxon>
        <taxon>Pseudomonadota</taxon>
        <taxon>Alphaproteobacteria</taxon>
        <taxon>Hyphomicrobiales</taxon>
        <taxon>Rhizobiaceae</taxon>
        <taxon>Rhizobium/Agrobacterium group</taxon>
        <taxon>Agrobacterium</taxon>
        <taxon>Agrobacterium tumefaciens complex</taxon>
    </lineage>
</organism>
<name>LACG_RHIRD</name>
<proteinExistence type="evidence at transcript level"/>
<protein>
    <recommendedName>
        <fullName>Lactose transport system permease protein LacG</fullName>
    </recommendedName>
</protein>
<gene>
    <name type="primary">lacG</name>
</gene>
<reference key="1">
    <citation type="journal article" date="1992" name="Mol. Microbiol.">
        <title>Molecular analysis of the lac operon encoding the binding-protein-dependent lactose transport system and beta-galactosidase in Agrobacterium radiobacter.</title>
        <authorList>
            <person name="Williams S.G."/>
            <person name="Greenwood J.A."/>
            <person name="Jones C.W."/>
        </authorList>
    </citation>
    <scope>NUCLEOTIDE SEQUENCE [GENOMIC DNA]</scope>
    <source>
        <strain>AR50</strain>
    </source>
</reference>
<evidence type="ECO:0000255" key="1">
    <source>
        <dbReference type="PROSITE-ProRule" id="PRU00441"/>
    </source>
</evidence>
<evidence type="ECO:0000305" key="2"/>
<dbReference type="EMBL" id="X66596">
    <property type="protein sequence ID" value="CAA47163.1"/>
    <property type="status" value="ALT_INIT"/>
    <property type="molecule type" value="Genomic_DNA"/>
</dbReference>
<dbReference type="PIR" id="S25249">
    <property type="entry name" value="MMAGCG"/>
</dbReference>
<dbReference type="SMR" id="P29824"/>
<dbReference type="TCDB" id="3.A.1.1.4">
    <property type="family name" value="the atp-binding cassette (abc) superfamily"/>
</dbReference>
<dbReference type="GO" id="GO:0005886">
    <property type="term" value="C:plasma membrane"/>
    <property type="evidence" value="ECO:0007669"/>
    <property type="project" value="UniProtKB-SubCell"/>
</dbReference>
<dbReference type="GO" id="GO:0055085">
    <property type="term" value="P:transmembrane transport"/>
    <property type="evidence" value="ECO:0007669"/>
    <property type="project" value="InterPro"/>
</dbReference>
<dbReference type="CDD" id="cd06261">
    <property type="entry name" value="TM_PBP2"/>
    <property type="match status" value="1"/>
</dbReference>
<dbReference type="Gene3D" id="1.10.3720.10">
    <property type="entry name" value="MetI-like"/>
    <property type="match status" value="1"/>
</dbReference>
<dbReference type="InterPro" id="IPR000515">
    <property type="entry name" value="MetI-like"/>
</dbReference>
<dbReference type="InterPro" id="IPR035906">
    <property type="entry name" value="MetI-like_sf"/>
</dbReference>
<dbReference type="PANTHER" id="PTHR43744">
    <property type="entry name" value="ABC TRANSPORTER PERMEASE PROTEIN MG189-RELATED-RELATED"/>
    <property type="match status" value="1"/>
</dbReference>
<dbReference type="PANTHER" id="PTHR43744:SF2">
    <property type="entry name" value="ARABINOOLIGOSACCHARIDES TRANSPORT SYSTEM PERMEASE PROTEIN ARAQ"/>
    <property type="match status" value="1"/>
</dbReference>
<dbReference type="Pfam" id="PF00528">
    <property type="entry name" value="BPD_transp_1"/>
    <property type="match status" value="1"/>
</dbReference>
<dbReference type="SUPFAM" id="SSF161098">
    <property type="entry name" value="MetI-like"/>
    <property type="match status" value="1"/>
</dbReference>
<dbReference type="PROSITE" id="PS50928">
    <property type="entry name" value="ABC_TM1"/>
    <property type="match status" value="1"/>
</dbReference>
<comment type="function">
    <text>Part of the binding-protein-dependent transport system for lactose. Probably responsible for the translocation of the substrate across the membrane.</text>
</comment>
<comment type="subcellular location">
    <subcellularLocation>
        <location>Cell inner membrane</location>
        <topology>Multi-pass membrane protein</topology>
    </subcellularLocation>
</comment>
<comment type="induction">
    <text>By lactose and various galactosides, and subject to catabolite repression by glucose, galactose and succinate. In strain AR50 the expression of the lac operon is constitutive.</text>
</comment>
<comment type="similarity">
    <text evidence="2">Belongs to the binding-protein-dependent transport system permease family. MalFG subfamily.</text>
</comment>
<comment type="caution">
    <text evidence="2">It is uncertain whether Met-1 or Met-2 is the initiator.</text>
</comment>
<comment type="sequence caution" evidence="2">
    <conflict type="erroneous initiation">
        <sequence resource="EMBL-CDS" id="CAA47163"/>
    </conflict>
</comment>
<feature type="chain" id="PRO_0000060057" description="Lactose transport system permease protein LacG">
    <location>
        <begin position="1"/>
        <end position="273"/>
    </location>
</feature>
<feature type="transmembrane region" description="Helical" evidence="1">
    <location>
        <begin position="15"/>
        <end position="35"/>
    </location>
</feature>
<feature type="transmembrane region" description="Helical" evidence="1">
    <location>
        <begin position="77"/>
        <end position="97"/>
    </location>
</feature>
<feature type="transmembrane region" description="Helical" evidence="1">
    <location>
        <begin position="110"/>
        <end position="130"/>
    </location>
</feature>
<feature type="transmembrane region" description="Helical" evidence="1">
    <location>
        <begin position="134"/>
        <end position="154"/>
    </location>
</feature>
<feature type="transmembrane region" description="Helical" evidence="1">
    <location>
        <begin position="182"/>
        <end position="204"/>
    </location>
</feature>
<feature type="transmembrane region" description="Helical" evidence="1">
    <location>
        <begin position="240"/>
        <end position="260"/>
    </location>
</feature>
<feature type="domain" description="ABC transmembrane type-1" evidence="1">
    <location>
        <begin position="71"/>
        <end position="260"/>
    </location>
</feature>